<accession>Q9ZE82</accession>
<proteinExistence type="inferred from homology"/>
<feature type="chain" id="PRO_0000205318" description="Deoxyguanosinetriphosphate triphosphohydrolase-like protein">
    <location>
        <begin position="1"/>
        <end position="383"/>
    </location>
</feature>
<feature type="domain" description="HD" evidence="2">
    <location>
        <begin position="62"/>
        <end position="198"/>
    </location>
</feature>
<keyword id="KW-0378">Hydrolase</keyword>
<keyword id="KW-1185">Reference proteome</keyword>
<evidence type="ECO:0000255" key="1">
    <source>
        <dbReference type="HAMAP-Rule" id="MF_01212"/>
    </source>
</evidence>
<evidence type="ECO:0000255" key="2">
    <source>
        <dbReference type="PROSITE-ProRule" id="PRU01175"/>
    </source>
</evidence>
<protein>
    <recommendedName>
        <fullName evidence="1">Deoxyguanosinetriphosphate triphosphohydrolase-like protein</fullName>
    </recommendedName>
</protein>
<reference key="1">
    <citation type="journal article" date="1998" name="Nature">
        <title>The genome sequence of Rickettsia prowazekii and the origin of mitochondria.</title>
        <authorList>
            <person name="Andersson S.G.E."/>
            <person name="Zomorodipour A."/>
            <person name="Andersson J.O."/>
            <person name="Sicheritz-Ponten T."/>
            <person name="Alsmark U.C.M."/>
            <person name="Podowski R.M."/>
            <person name="Naeslund A.K."/>
            <person name="Eriksson A.-S."/>
            <person name="Winkler H.H."/>
            <person name="Kurland C.G."/>
        </authorList>
    </citation>
    <scope>NUCLEOTIDE SEQUENCE [LARGE SCALE GENOMIC DNA]</scope>
    <source>
        <strain>Madrid E</strain>
    </source>
</reference>
<name>DGTL1_RICPR</name>
<organism>
    <name type="scientific">Rickettsia prowazekii (strain Madrid E)</name>
    <dbReference type="NCBI Taxonomy" id="272947"/>
    <lineage>
        <taxon>Bacteria</taxon>
        <taxon>Pseudomonadati</taxon>
        <taxon>Pseudomonadota</taxon>
        <taxon>Alphaproteobacteria</taxon>
        <taxon>Rickettsiales</taxon>
        <taxon>Rickettsiaceae</taxon>
        <taxon>Rickettsieae</taxon>
        <taxon>Rickettsia</taxon>
        <taxon>typhus group</taxon>
    </lineage>
</organism>
<sequence>MLASYASDPLKSRGRLYKEIPTYYRNEFERDRDRIIHTNAFRRLQYKTQVFINHEGDHYRNRLTHSLEVSTVARSVANTLNLSSDLAETIALAHDLGHTPFGHAGERALNECMKEYHGFSHNSQSLKILTLLEKRYAAYNGVNLTWEVLEGIVKHNGPILGAINEYVAEYNKQNDLELSTYASAEAQVASLADDISYISHDLEDSIGAKIIDFDSLAELQYIDNYVFELKAKFKDISPSCLIYEVVRKLIHELITDLLWQTKENLNKEKITNIDEIRNLHYPIVDFTEKTNERINEIKKFLHKRVYESNKMIAISIKCTKIVQGLFKIYMDDINLLPTNWKILIDSNKTYSKARVIADYIAGMTDRFAIQEYNQLCSPNFNNI</sequence>
<gene>
    <name type="ordered locus">RP064</name>
</gene>
<dbReference type="EMBL" id="AJ235270">
    <property type="protein sequence ID" value="CAA14535.1"/>
    <property type="molecule type" value="Genomic_DNA"/>
</dbReference>
<dbReference type="PIR" id="H71714">
    <property type="entry name" value="H71714"/>
</dbReference>
<dbReference type="RefSeq" id="NP_220458.1">
    <property type="nucleotide sequence ID" value="NC_000963.1"/>
</dbReference>
<dbReference type="RefSeq" id="WP_004596578.1">
    <property type="nucleotide sequence ID" value="NC_000963.1"/>
</dbReference>
<dbReference type="SMR" id="Q9ZE82"/>
<dbReference type="STRING" id="272947.gene:17555147"/>
<dbReference type="EnsemblBacteria" id="CAA14535">
    <property type="protein sequence ID" value="CAA14535"/>
    <property type="gene ID" value="CAA14535"/>
</dbReference>
<dbReference type="KEGG" id="rpr:RP064"/>
<dbReference type="PATRIC" id="fig|272947.5.peg.65"/>
<dbReference type="eggNOG" id="COG0232">
    <property type="taxonomic scope" value="Bacteria"/>
</dbReference>
<dbReference type="HOGENOM" id="CLU_028163_1_0_5"/>
<dbReference type="OrthoDB" id="9803619at2"/>
<dbReference type="Proteomes" id="UP000002480">
    <property type="component" value="Chromosome"/>
</dbReference>
<dbReference type="GO" id="GO:0008832">
    <property type="term" value="F:dGTPase activity"/>
    <property type="evidence" value="ECO:0007669"/>
    <property type="project" value="TreeGrafter"/>
</dbReference>
<dbReference type="GO" id="GO:0006203">
    <property type="term" value="P:dGTP catabolic process"/>
    <property type="evidence" value="ECO:0007669"/>
    <property type="project" value="TreeGrafter"/>
</dbReference>
<dbReference type="CDD" id="cd00077">
    <property type="entry name" value="HDc"/>
    <property type="match status" value="1"/>
</dbReference>
<dbReference type="Gene3D" id="1.10.3210.10">
    <property type="entry name" value="Hypothetical protein af1432"/>
    <property type="match status" value="1"/>
</dbReference>
<dbReference type="HAMAP" id="MF_01212">
    <property type="entry name" value="dGTPase_type2"/>
    <property type="match status" value="1"/>
</dbReference>
<dbReference type="InterPro" id="IPR006261">
    <property type="entry name" value="dGTPase"/>
</dbReference>
<dbReference type="InterPro" id="IPR050135">
    <property type="entry name" value="dGTPase-like"/>
</dbReference>
<dbReference type="InterPro" id="IPR023023">
    <property type="entry name" value="dNTPase_2"/>
</dbReference>
<dbReference type="InterPro" id="IPR003607">
    <property type="entry name" value="HD/PDEase_dom"/>
</dbReference>
<dbReference type="InterPro" id="IPR006674">
    <property type="entry name" value="HD_domain"/>
</dbReference>
<dbReference type="InterPro" id="IPR026875">
    <property type="entry name" value="PHydrolase_assoc_dom"/>
</dbReference>
<dbReference type="NCBIfam" id="TIGR01353">
    <property type="entry name" value="dGTP_triPase"/>
    <property type="match status" value="1"/>
</dbReference>
<dbReference type="NCBIfam" id="NF002326">
    <property type="entry name" value="PRK01286.1-1"/>
    <property type="match status" value="1"/>
</dbReference>
<dbReference type="NCBIfam" id="NF002330">
    <property type="entry name" value="PRK01286.1-5"/>
    <property type="match status" value="1"/>
</dbReference>
<dbReference type="PANTHER" id="PTHR11373:SF43">
    <property type="entry name" value="DEOXYGUANOSINETRIPHOSPHATE TRIPHOSPHOHYDROLASE-LIKE PROTEIN"/>
    <property type="match status" value="1"/>
</dbReference>
<dbReference type="PANTHER" id="PTHR11373">
    <property type="entry name" value="DEOXYNUCLEOSIDE TRIPHOSPHATE TRIPHOSPHOHYDROLASE"/>
    <property type="match status" value="1"/>
</dbReference>
<dbReference type="Pfam" id="PF01966">
    <property type="entry name" value="HD"/>
    <property type="match status" value="1"/>
</dbReference>
<dbReference type="Pfam" id="PF13286">
    <property type="entry name" value="HD_assoc"/>
    <property type="match status" value="1"/>
</dbReference>
<dbReference type="SMART" id="SM00471">
    <property type="entry name" value="HDc"/>
    <property type="match status" value="1"/>
</dbReference>
<dbReference type="SUPFAM" id="SSF109604">
    <property type="entry name" value="HD-domain/PDEase-like"/>
    <property type="match status" value="1"/>
</dbReference>
<dbReference type="PROSITE" id="PS51831">
    <property type="entry name" value="HD"/>
    <property type="match status" value="1"/>
</dbReference>
<comment type="similarity">
    <text evidence="1">Belongs to the dGTPase family. Type 2 subfamily.</text>
</comment>